<reference key="1">
    <citation type="journal article" date="2006" name="PLoS Biol.">
        <title>Metabolic complementarity and genomics of the dual bacterial symbiosis of sharpshooters.</title>
        <authorList>
            <person name="Wu D."/>
            <person name="Daugherty S.C."/>
            <person name="Van Aken S.E."/>
            <person name="Pai G.H."/>
            <person name="Watkins K.L."/>
            <person name="Khouri H."/>
            <person name="Tallon L.J."/>
            <person name="Zaborsky J.M."/>
            <person name="Dunbar H.E."/>
            <person name="Tran P.L."/>
            <person name="Moran N.A."/>
            <person name="Eisen J.A."/>
        </authorList>
    </citation>
    <scope>NUCLEOTIDE SEQUENCE [LARGE SCALE GENOMIC DNA]</scope>
</reference>
<evidence type="ECO:0000255" key="1">
    <source>
        <dbReference type="HAMAP-Rule" id="MF_00059"/>
    </source>
</evidence>
<accession>Q1LTB3</accession>
<protein>
    <recommendedName>
        <fullName evidence="1">DNA-directed RNA polymerase subunit alpha</fullName>
        <shortName evidence="1">RNAP subunit alpha</shortName>
        <ecNumber evidence="1">2.7.7.6</ecNumber>
    </recommendedName>
    <alternativeName>
        <fullName evidence="1">RNA polymerase subunit alpha</fullName>
    </alternativeName>
    <alternativeName>
        <fullName evidence="1">Transcriptase subunit alpha</fullName>
    </alternativeName>
</protein>
<keyword id="KW-0240">DNA-directed RNA polymerase</keyword>
<keyword id="KW-0548">Nucleotidyltransferase</keyword>
<keyword id="KW-1185">Reference proteome</keyword>
<keyword id="KW-0804">Transcription</keyword>
<keyword id="KW-0808">Transferase</keyword>
<gene>
    <name evidence="1" type="primary">rpoA</name>
    <name type="ordered locus">BCI_0353</name>
</gene>
<organism>
    <name type="scientific">Baumannia cicadellinicola subsp. Homalodisca coagulata</name>
    <dbReference type="NCBI Taxonomy" id="374463"/>
    <lineage>
        <taxon>Bacteria</taxon>
        <taxon>Pseudomonadati</taxon>
        <taxon>Pseudomonadota</taxon>
        <taxon>Gammaproteobacteria</taxon>
        <taxon>Candidatus Palibaumannia</taxon>
    </lineage>
</organism>
<proteinExistence type="inferred from homology"/>
<comment type="function">
    <text evidence="1">DNA-dependent RNA polymerase catalyzes the transcription of DNA into RNA using the four ribonucleoside triphosphates as substrates.</text>
</comment>
<comment type="catalytic activity">
    <reaction evidence="1">
        <text>RNA(n) + a ribonucleoside 5'-triphosphate = RNA(n+1) + diphosphate</text>
        <dbReference type="Rhea" id="RHEA:21248"/>
        <dbReference type="Rhea" id="RHEA-COMP:14527"/>
        <dbReference type="Rhea" id="RHEA-COMP:17342"/>
        <dbReference type="ChEBI" id="CHEBI:33019"/>
        <dbReference type="ChEBI" id="CHEBI:61557"/>
        <dbReference type="ChEBI" id="CHEBI:140395"/>
        <dbReference type="EC" id="2.7.7.6"/>
    </reaction>
</comment>
<comment type="subunit">
    <text evidence="1">Homodimer. The RNAP catalytic core consists of 2 alpha, 1 beta, 1 beta' and 1 omega subunit. When a sigma factor is associated with the core the holoenzyme is formed, which can initiate transcription.</text>
</comment>
<comment type="domain">
    <text evidence="1">The N-terminal domain is essential for RNAP assembly and basal transcription, whereas the C-terminal domain is involved in interaction with transcriptional regulators and with upstream promoter elements.</text>
</comment>
<comment type="similarity">
    <text evidence="1">Belongs to the RNA polymerase alpha chain family.</text>
</comment>
<name>RPOA_BAUCH</name>
<dbReference type="EC" id="2.7.7.6" evidence="1"/>
<dbReference type="EMBL" id="CP000238">
    <property type="protein sequence ID" value="ABF13880.1"/>
    <property type="molecule type" value="Genomic_DNA"/>
</dbReference>
<dbReference type="RefSeq" id="WP_011520534.1">
    <property type="nucleotide sequence ID" value="NC_007984.1"/>
</dbReference>
<dbReference type="SMR" id="Q1LTB3"/>
<dbReference type="STRING" id="374463.BCI_0353"/>
<dbReference type="KEGG" id="bci:BCI_0353"/>
<dbReference type="HOGENOM" id="CLU_053084_0_1_6"/>
<dbReference type="OrthoDB" id="9805706at2"/>
<dbReference type="Proteomes" id="UP000002427">
    <property type="component" value="Chromosome"/>
</dbReference>
<dbReference type="GO" id="GO:0005737">
    <property type="term" value="C:cytoplasm"/>
    <property type="evidence" value="ECO:0007669"/>
    <property type="project" value="UniProtKB-ARBA"/>
</dbReference>
<dbReference type="GO" id="GO:0000428">
    <property type="term" value="C:DNA-directed RNA polymerase complex"/>
    <property type="evidence" value="ECO:0007669"/>
    <property type="project" value="UniProtKB-KW"/>
</dbReference>
<dbReference type="GO" id="GO:0003677">
    <property type="term" value="F:DNA binding"/>
    <property type="evidence" value="ECO:0007669"/>
    <property type="project" value="UniProtKB-UniRule"/>
</dbReference>
<dbReference type="GO" id="GO:0003899">
    <property type="term" value="F:DNA-directed RNA polymerase activity"/>
    <property type="evidence" value="ECO:0007669"/>
    <property type="project" value="UniProtKB-UniRule"/>
</dbReference>
<dbReference type="GO" id="GO:0046983">
    <property type="term" value="F:protein dimerization activity"/>
    <property type="evidence" value="ECO:0007669"/>
    <property type="project" value="InterPro"/>
</dbReference>
<dbReference type="GO" id="GO:0006351">
    <property type="term" value="P:DNA-templated transcription"/>
    <property type="evidence" value="ECO:0007669"/>
    <property type="project" value="UniProtKB-UniRule"/>
</dbReference>
<dbReference type="CDD" id="cd06928">
    <property type="entry name" value="RNAP_alpha_NTD"/>
    <property type="match status" value="1"/>
</dbReference>
<dbReference type="FunFam" id="1.10.150.20:FF:000001">
    <property type="entry name" value="DNA-directed RNA polymerase subunit alpha"/>
    <property type="match status" value="1"/>
</dbReference>
<dbReference type="FunFam" id="2.170.120.12:FF:000001">
    <property type="entry name" value="DNA-directed RNA polymerase subunit alpha"/>
    <property type="match status" value="1"/>
</dbReference>
<dbReference type="Gene3D" id="1.10.150.20">
    <property type="entry name" value="5' to 3' exonuclease, C-terminal subdomain"/>
    <property type="match status" value="1"/>
</dbReference>
<dbReference type="Gene3D" id="2.170.120.12">
    <property type="entry name" value="DNA-directed RNA polymerase, insert domain"/>
    <property type="match status" value="1"/>
</dbReference>
<dbReference type="Gene3D" id="3.30.1360.10">
    <property type="entry name" value="RNA polymerase, RBP11-like subunit"/>
    <property type="match status" value="1"/>
</dbReference>
<dbReference type="HAMAP" id="MF_00059">
    <property type="entry name" value="RNApol_bact_RpoA"/>
    <property type="match status" value="1"/>
</dbReference>
<dbReference type="InterPro" id="IPR011262">
    <property type="entry name" value="DNA-dir_RNA_pol_insert"/>
</dbReference>
<dbReference type="InterPro" id="IPR011263">
    <property type="entry name" value="DNA-dir_RNA_pol_RpoA/D/Rpb3"/>
</dbReference>
<dbReference type="InterPro" id="IPR011773">
    <property type="entry name" value="DNA-dir_RpoA"/>
</dbReference>
<dbReference type="InterPro" id="IPR036603">
    <property type="entry name" value="RBP11-like"/>
</dbReference>
<dbReference type="InterPro" id="IPR011260">
    <property type="entry name" value="RNAP_asu_C"/>
</dbReference>
<dbReference type="InterPro" id="IPR036643">
    <property type="entry name" value="RNApol_insert_sf"/>
</dbReference>
<dbReference type="NCBIfam" id="NF003513">
    <property type="entry name" value="PRK05182.1-2"/>
    <property type="match status" value="1"/>
</dbReference>
<dbReference type="NCBIfam" id="NF003519">
    <property type="entry name" value="PRK05182.2-5"/>
    <property type="match status" value="1"/>
</dbReference>
<dbReference type="NCBIfam" id="TIGR02027">
    <property type="entry name" value="rpoA"/>
    <property type="match status" value="1"/>
</dbReference>
<dbReference type="Pfam" id="PF01000">
    <property type="entry name" value="RNA_pol_A_bac"/>
    <property type="match status" value="1"/>
</dbReference>
<dbReference type="Pfam" id="PF03118">
    <property type="entry name" value="RNA_pol_A_CTD"/>
    <property type="match status" value="1"/>
</dbReference>
<dbReference type="Pfam" id="PF01193">
    <property type="entry name" value="RNA_pol_L"/>
    <property type="match status" value="1"/>
</dbReference>
<dbReference type="SMART" id="SM00662">
    <property type="entry name" value="RPOLD"/>
    <property type="match status" value="1"/>
</dbReference>
<dbReference type="SUPFAM" id="SSF47789">
    <property type="entry name" value="C-terminal domain of RNA polymerase alpha subunit"/>
    <property type="match status" value="1"/>
</dbReference>
<dbReference type="SUPFAM" id="SSF56553">
    <property type="entry name" value="Insert subdomain of RNA polymerase alpha subunit"/>
    <property type="match status" value="1"/>
</dbReference>
<dbReference type="SUPFAM" id="SSF55257">
    <property type="entry name" value="RBP11-like subunits of RNA polymerase"/>
    <property type="match status" value="1"/>
</dbReference>
<feature type="chain" id="PRO_0000264483" description="DNA-directed RNA polymerase subunit alpha">
    <location>
        <begin position="1"/>
        <end position="327"/>
    </location>
</feature>
<feature type="region of interest" description="Alpha N-terminal domain (alpha-NTD)" evidence="1">
    <location>
        <begin position="1"/>
        <end position="233"/>
    </location>
</feature>
<feature type="region of interest" description="Alpha C-terminal domain (alpha-CTD)" evidence="1">
    <location>
        <begin position="247"/>
        <end position="327"/>
    </location>
</feature>
<sequence length="327" mass="36605">MQGSVTEFLKPRLVDIEQLSLTHAKVILEPLERGFGHTLGNALRRILLSSIPGYAVTEVEIDGILHEYSTKEGIREDIIEILLNLKELAVKVQSKDNVILTLNKSGLGPVTAANIIHDSDVQIIKPQHILCHLTEENASINMRIKVQRGRGYVPASARIHKYDRPIGRLLVDACYSPVENISYNVEAARVEQRTDLDKLILEIETNGTIDPEEAIRRAATILAEQLEAFVDLRDISQPEVKEEKPEFDPVLLRPVDDLELTVRSANCLKAEAIHYIGDLVQRTEVELLKTPNLGKKSLTEIKDVLASRGLSLGMRLENWPPLGFIDK</sequence>